<accession>Q5XI97</accession>
<feature type="chain" id="PRO_0000277467" description="Alanyl-tRNA editing protein Aarsd1">
    <location>
        <begin position="1"/>
        <end position="412"/>
    </location>
</feature>
<feature type="binding site" evidence="2">
    <location>
        <position position="109"/>
    </location>
    <ligand>
        <name>Zn(2+)</name>
        <dbReference type="ChEBI" id="CHEBI:29105"/>
    </ligand>
</feature>
<feature type="binding site" evidence="2">
    <location>
        <position position="113"/>
    </location>
    <ligand>
        <name>Zn(2+)</name>
        <dbReference type="ChEBI" id="CHEBI:29105"/>
    </ligand>
</feature>
<feature type="binding site" evidence="2">
    <location>
        <position position="209"/>
    </location>
    <ligand>
        <name>Zn(2+)</name>
        <dbReference type="ChEBI" id="CHEBI:29105"/>
    </ligand>
</feature>
<feature type="binding site" evidence="2">
    <location>
        <position position="213"/>
    </location>
    <ligand>
        <name>Zn(2+)</name>
        <dbReference type="ChEBI" id="CHEBI:29105"/>
    </ligand>
</feature>
<feature type="modified residue" description="Phosphoserine" evidence="4">
    <location>
        <position position="174"/>
    </location>
</feature>
<reference key="1">
    <citation type="journal article" date="2004" name="Genome Res.">
        <title>The status, quality, and expansion of the NIH full-length cDNA project: the Mammalian Gene Collection (MGC).</title>
        <authorList>
            <consortium name="The MGC Project Team"/>
        </authorList>
    </citation>
    <scope>NUCLEOTIDE SEQUENCE [LARGE SCALE MRNA]</scope>
    <source>
        <tissue>Kidney</tissue>
    </source>
</reference>
<reference key="2">
    <citation type="journal article" date="2012" name="Nat. Commun.">
        <title>Quantitative maps of protein phosphorylation sites across 14 different rat organs and tissues.</title>
        <authorList>
            <person name="Lundby A."/>
            <person name="Secher A."/>
            <person name="Lage K."/>
            <person name="Nordsborg N.B."/>
            <person name="Dmytriyev A."/>
            <person name="Lundby C."/>
            <person name="Olsen J.V."/>
        </authorList>
    </citation>
    <scope>PHOSPHORYLATION [LARGE SCALE ANALYSIS] AT SER-174</scope>
    <scope>IDENTIFICATION BY MASS SPECTROMETRY [LARGE SCALE ANALYSIS]</scope>
</reference>
<evidence type="ECO:0000250" key="1"/>
<evidence type="ECO:0000255" key="2"/>
<evidence type="ECO:0000305" key="3"/>
<evidence type="ECO:0007744" key="4">
    <source>
    </source>
</evidence>
<dbReference type="EMBL" id="BC083790">
    <property type="protein sequence ID" value="AAH83790.1"/>
    <property type="molecule type" value="mRNA"/>
</dbReference>
<dbReference type="RefSeq" id="NP_001029281.1">
    <property type="nucleotide sequence ID" value="NM_001034109.2"/>
</dbReference>
<dbReference type="SMR" id="Q5XI97"/>
<dbReference type="BioGRID" id="565992">
    <property type="interactions" value="1"/>
</dbReference>
<dbReference type="FunCoup" id="Q5XI97">
    <property type="interactions" value="1864"/>
</dbReference>
<dbReference type="STRING" id="10116.ENSRNOP00000028047"/>
<dbReference type="GlyGen" id="Q5XI97">
    <property type="glycosylation" value="1 site"/>
</dbReference>
<dbReference type="iPTMnet" id="Q5XI97"/>
<dbReference type="PhosphoSitePlus" id="Q5XI97"/>
<dbReference type="jPOST" id="Q5XI97"/>
<dbReference type="PaxDb" id="10116-ENSRNOP00000028047"/>
<dbReference type="Ensembl" id="ENSRNOT00000028047.5">
    <property type="protein sequence ID" value="ENSRNOP00000028047.3"/>
    <property type="gene ID" value="ENSRNOG00000020658.6"/>
</dbReference>
<dbReference type="GeneID" id="619440"/>
<dbReference type="KEGG" id="rno:619440"/>
<dbReference type="UCSC" id="RGD:1561650">
    <property type="organism name" value="rat"/>
</dbReference>
<dbReference type="AGR" id="RGD:1561650"/>
<dbReference type="CTD" id="80755"/>
<dbReference type="RGD" id="1561650">
    <property type="gene designation" value="Aarsd1"/>
</dbReference>
<dbReference type="eggNOG" id="KOG2105">
    <property type="taxonomic scope" value="Eukaryota"/>
</dbReference>
<dbReference type="GeneTree" id="ENSGT00940000156241"/>
<dbReference type="HOGENOM" id="CLU_004485_7_0_1"/>
<dbReference type="InParanoid" id="Q5XI97"/>
<dbReference type="OMA" id="KYDTTSW"/>
<dbReference type="OrthoDB" id="40893at9989"/>
<dbReference type="PhylomeDB" id="Q5XI97"/>
<dbReference type="PRO" id="PR:Q5XI97"/>
<dbReference type="Proteomes" id="UP000002494">
    <property type="component" value="Chromosome 10"/>
</dbReference>
<dbReference type="Bgee" id="ENSRNOG00000020658">
    <property type="expression patterns" value="Expressed in skeletal muscle tissue and 20 other cell types or tissues"/>
</dbReference>
<dbReference type="GO" id="GO:0005737">
    <property type="term" value="C:cytoplasm"/>
    <property type="evidence" value="ECO:0007669"/>
    <property type="project" value="UniProtKB-SubCell"/>
</dbReference>
<dbReference type="GO" id="GO:0004813">
    <property type="term" value="F:alanine-tRNA ligase activity"/>
    <property type="evidence" value="ECO:0007669"/>
    <property type="project" value="InterPro"/>
</dbReference>
<dbReference type="GO" id="GO:0002161">
    <property type="term" value="F:aminoacyl-tRNA deacylase activity"/>
    <property type="evidence" value="ECO:0000266"/>
    <property type="project" value="RGD"/>
</dbReference>
<dbReference type="GO" id="GO:0005524">
    <property type="term" value="F:ATP binding"/>
    <property type="evidence" value="ECO:0007669"/>
    <property type="project" value="InterPro"/>
</dbReference>
<dbReference type="GO" id="GO:0046872">
    <property type="term" value="F:metal ion binding"/>
    <property type="evidence" value="ECO:0007669"/>
    <property type="project" value="UniProtKB-KW"/>
</dbReference>
<dbReference type="GO" id="GO:0003676">
    <property type="term" value="F:nucleic acid binding"/>
    <property type="evidence" value="ECO:0007669"/>
    <property type="project" value="InterPro"/>
</dbReference>
<dbReference type="GO" id="GO:0002196">
    <property type="term" value="F:Ser-tRNA(Ala) deacylase activity"/>
    <property type="evidence" value="ECO:0000266"/>
    <property type="project" value="RGD"/>
</dbReference>
<dbReference type="GO" id="GO:0006419">
    <property type="term" value="P:alanyl-tRNA aminoacylation"/>
    <property type="evidence" value="ECO:0007669"/>
    <property type="project" value="InterPro"/>
</dbReference>
<dbReference type="GO" id="GO:0006450">
    <property type="term" value="P:regulation of translational fidelity"/>
    <property type="evidence" value="ECO:0000266"/>
    <property type="project" value="RGD"/>
</dbReference>
<dbReference type="FunFam" id="3.30.980.10:FF:000007">
    <property type="entry name" value="alanyl-tRNA editing protein Aarsd1"/>
    <property type="match status" value="1"/>
</dbReference>
<dbReference type="FunFam" id="2.40.30.130:FF:000012">
    <property type="entry name" value="Predicted gene, 27029"/>
    <property type="match status" value="1"/>
</dbReference>
<dbReference type="Gene3D" id="2.40.30.130">
    <property type="match status" value="1"/>
</dbReference>
<dbReference type="Gene3D" id="3.30.980.10">
    <property type="entry name" value="Threonyl-trna Synthetase, Chain A, domain 2"/>
    <property type="match status" value="1"/>
</dbReference>
<dbReference type="InterPro" id="IPR018165">
    <property type="entry name" value="Ala-tRNA-synth_IIc_core"/>
</dbReference>
<dbReference type="InterPro" id="IPR051335">
    <property type="entry name" value="Alanyl-tRNA_Editing_Enzymes"/>
</dbReference>
<dbReference type="InterPro" id="IPR018163">
    <property type="entry name" value="Thr/Ala-tRNA-synth_IIc_edit"/>
</dbReference>
<dbReference type="InterPro" id="IPR009000">
    <property type="entry name" value="Transl_B-barrel_sf"/>
</dbReference>
<dbReference type="InterPro" id="IPR012947">
    <property type="entry name" value="tRNA_SAD"/>
</dbReference>
<dbReference type="PANTHER" id="PTHR43462">
    <property type="entry name" value="ALANYL-TRNA EDITING PROTEIN"/>
    <property type="match status" value="1"/>
</dbReference>
<dbReference type="PANTHER" id="PTHR43462:SF1">
    <property type="entry name" value="ALANYL-TRNA EDITING PROTEIN AARSD1"/>
    <property type="match status" value="1"/>
</dbReference>
<dbReference type="Pfam" id="PF07973">
    <property type="entry name" value="tRNA_SAD"/>
    <property type="match status" value="1"/>
</dbReference>
<dbReference type="SMART" id="SM00863">
    <property type="entry name" value="tRNA_SAD"/>
    <property type="match status" value="1"/>
</dbReference>
<dbReference type="SUPFAM" id="SSF55186">
    <property type="entry name" value="ThrRS/AlaRS common domain"/>
    <property type="match status" value="1"/>
</dbReference>
<dbReference type="SUPFAM" id="SSF50447">
    <property type="entry name" value="Translation proteins"/>
    <property type="match status" value="1"/>
</dbReference>
<dbReference type="PROSITE" id="PS50860">
    <property type="entry name" value="AA_TRNA_LIGASE_II_ALA"/>
    <property type="match status" value="1"/>
</dbReference>
<keyword id="KW-0963">Cytoplasm</keyword>
<keyword id="KW-0479">Metal-binding</keyword>
<keyword id="KW-0597">Phosphoprotein</keyword>
<keyword id="KW-0648">Protein biosynthesis</keyword>
<keyword id="KW-1185">Reference proteome</keyword>
<keyword id="KW-0862">Zinc</keyword>
<name>AASD1_RAT</name>
<gene>
    <name type="primary">Aarsd1</name>
</gene>
<organism>
    <name type="scientific">Rattus norvegicus</name>
    <name type="common">Rat</name>
    <dbReference type="NCBI Taxonomy" id="10116"/>
    <lineage>
        <taxon>Eukaryota</taxon>
        <taxon>Metazoa</taxon>
        <taxon>Chordata</taxon>
        <taxon>Craniata</taxon>
        <taxon>Vertebrata</taxon>
        <taxon>Euteleostomi</taxon>
        <taxon>Mammalia</taxon>
        <taxon>Eutheria</taxon>
        <taxon>Euarchontoglires</taxon>
        <taxon>Glires</taxon>
        <taxon>Rodentia</taxon>
        <taxon>Myomorpha</taxon>
        <taxon>Muroidea</taxon>
        <taxon>Muridae</taxon>
        <taxon>Murinae</taxon>
        <taxon>Rattus</taxon>
    </lineage>
</organism>
<proteinExistence type="evidence at protein level"/>
<comment type="function">
    <text evidence="1">Functions in trans to edit the amino acid moiety from incorrectly charged tRNA(Ala).</text>
</comment>
<comment type="cofactor">
    <cofactor evidence="3">
        <name>Zn(2+)</name>
        <dbReference type="ChEBI" id="CHEBI:29105"/>
    </cofactor>
    <text evidence="3">Binds 1 zinc ion per subunit.</text>
</comment>
<comment type="subcellular location">
    <subcellularLocation>
        <location evidence="1">Cytoplasm</location>
    </subcellularLocation>
</comment>
<comment type="similarity">
    <text evidence="3">Belongs to the class-II aminoacyl-tRNA synthetase family. Alax-L subfamily.</text>
</comment>
<sequence length="412" mass="45093">MAFLCQRDSYAREFTTTVVSCCPAELQTDGNGSKKEVLSGFQVVLEDTLLFPEGGGQPDDRGTINDISVLRVTRRGAQADHFTQTPLSPGSQVQVRVDWERRFDHMQQHSGQHLITAVADLLFGLKTTSWELGKLRCVIELDSPSVTAEQVAAIEQSVNQKIRDRLPVSVRELSLDDPEVEQVRGRGLPDDHAGPIRVVTIEGVDSNMCCGTHVNNLSDLQVIKILGTEKGKKNKSNLIFLAGNRVLKWMERSHGSEKALTSLLKCGAEDHVEAVKKLQNATKLLQKNNLNLLRDLAVHTAHTLRSSPAWGGVVTLHRKEGDSEFMNIIANEIGSEETLLFLTVGDEKGAGLFLLAGPTEAVETLGPRVAEVLEGKGAGKKGRFQGKATKMSRRAEVQALLQDYVSTQSAEE</sequence>
<protein>
    <recommendedName>
        <fullName>Alanyl-tRNA editing protein Aarsd1</fullName>
    </recommendedName>
    <alternativeName>
        <fullName>Alanyl-tRNA synthetase domain-containing protein 1</fullName>
    </alternativeName>
</protein>